<protein>
    <recommendedName>
        <fullName evidence="1">ATP synthase subunit delta</fullName>
    </recommendedName>
    <alternativeName>
        <fullName evidence="1">ATP synthase F(1) sector subunit delta</fullName>
    </alternativeName>
    <alternativeName>
        <fullName evidence="1">F-type ATPase subunit delta</fullName>
        <shortName evidence="1">F-ATPase subunit delta</shortName>
    </alternativeName>
</protein>
<proteinExistence type="inferred from homology"/>
<gene>
    <name evidence="1" type="primary">atpH</name>
    <name evidence="1" type="synonym">atpD</name>
    <name type="ordered locus">A9601_16541</name>
</gene>
<feature type="chain" id="PRO_0000371060" description="ATP synthase subunit delta">
    <location>
        <begin position="1"/>
        <end position="180"/>
    </location>
</feature>
<organism>
    <name type="scientific">Prochlorococcus marinus (strain AS9601)</name>
    <dbReference type="NCBI Taxonomy" id="146891"/>
    <lineage>
        <taxon>Bacteria</taxon>
        <taxon>Bacillati</taxon>
        <taxon>Cyanobacteriota</taxon>
        <taxon>Cyanophyceae</taxon>
        <taxon>Synechococcales</taxon>
        <taxon>Prochlorococcaceae</taxon>
        <taxon>Prochlorococcus</taxon>
    </lineage>
</organism>
<dbReference type="EMBL" id="CP000551">
    <property type="protein sequence ID" value="ABM70937.1"/>
    <property type="molecule type" value="Genomic_DNA"/>
</dbReference>
<dbReference type="RefSeq" id="WP_011819067.1">
    <property type="nucleotide sequence ID" value="NC_008816.1"/>
</dbReference>
<dbReference type="SMR" id="A2BT26"/>
<dbReference type="STRING" id="146891.A9601_16541"/>
<dbReference type="KEGG" id="pmb:A9601_16541"/>
<dbReference type="eggNOG" id="COG0712">
    <property type="taxonomic scope" value="Bacteria"/>
</dbReference>
<dbReference type="HOGENOM" id="CLU_085114_4_1_3"/>
<dbReference type="OrthoDB" id="9802471at2"/>
<dbReference type="Proteomes" id="UP000002590">
    <property type="component" value="Chromosome"/>
</dbReference>
<dbReference type="GO" id="GO:0031676">
    <property type="term" value="C:plasma membrane-derived thylakoid membrane"/>
    <property type="evidence" value="ECO:0007669"/>
    <property type="project" value="UniProtKB-SubCell"/>
</dbReference>
<dbReference type="GO" id="GO:0045259">
    <property type="term" value="C:proton-transporting ATP synthase complex"/>
    <property type="evidence" value="ECO:0007669"/>
    <property type="project" value="UniProtKB-KW"/>
</dbReference>
<dbReference type="GO" id="GO:0046933">
    <property type="term" value="F:proton-transporting ATP synthase activity, rotational mechanism"/>
    <property type="evidence" value="ECO:0007669"/>
    <property type="project" value="UniProtKB-UniRule"/>
</dbReference>
<dbReference type="Gene3D" id="1.10.520.20">
    <property type="entry name" value="N-terminal domain of the delta subunit of the F1F0-ATP synthase"/>
    <property type="match status" value="1"/>
</dbReference>
<dbReference type="HAMAP" id="MF_01416">
    <property type="entry name" value="ATP_synth_delta_bact"/>
    <property type="match status" value="1"/>
</dbReference>
<dbReference type="InterPro" id="IPR026015">
    <property type="entry name" value="ATP_synth_OSCP/delta_N_sf"/>
</dbReference>
<dbReference type="InterPro" id="IPR000711">
    <property type="entry name" value="ATPase_OSCP/dsu"/>
</dbReference>
<dbReference type="NCBIfam" id="TIGR01145">
    <property type="entry name" value="ATP_synt_delta"/>
    <property type="match status" value="1"/>
</dbReference>
<dbReference type="PANTHER" id="PTHR11910">
    <property type="entry name" value="ATP SYNTHASE DELTA CHAIN"/>
    <property type="match status" value="1"/>
</dbReference>
<dbReference type="Pfam" id="PF00213">
    <property type="entry name" value="OSCP"/>
    <property type="match status" value="1"/>
</dbReference>
<dbReference type="PRINTS" id="PR00125">
    <property type="entry name" value="ATPASEDELTA"/>
</dbReference>
<dbReference type="SUPFAM" id="SSF47928">
    <property type="entry name" value="N-terminal domain of the delta subunit of the F1F0-ATP synthase"/>
    <property type="match status" value="1"/>
</dbReference>
<evidence type="ECO:0000255" key="1">
    <source>
        <dbReference type="HAMAP-Rule" id="MF_01416"/>
    </source>
</evidence>
<accession>A2BT26</accession>
<reference key="1">
    <citation type="journal article" date="2007" name="PLoS Genet.">
        <title>Patterns and implications of gene gain and loss in the evolution of Prochlorococcus.</title>
        <authorList>
            <person name="Kettler G.C."/>
            <person name="Martiny A.C."/>
            <person name="Huang K."/>
            <person name="Zucker J."/>
            <person name="Coleman M.L."/>
            <person name="Rodrigue S."/>
            <person name="Chen F."/>
            <person name="Lapidus A."/>
            <person name="Ferriera S."/>
            <person name="Johnson J."/>
            <person name="Steglich C."/>
            <person name="Church G.M."/>
            <person name="Richardson P."/>
            <person name="Chisholm S.W."/>
        </authorList>
    </citation>
    <scope>NUCLEOTIDE SEQUENCE [LARGE SCALE GENOMIC DNA]</scope>
    <source>
        <strain>AS9601</strain>
    </source>
</reference>
<name>ATPD_PROMS</name>
<comment type="function">
    <text evidence="1">F(1)F(0) ATP synthase produces ATP from ADP in the presence of a proton or sodium gradient. F-type ATPases consist of two structural domains, F(1) containing the extramembraneous catalytic core and F(0) containing the membrane proton channel, linked together by a central stalk and a peripheral stalk. During catalysis, ATP synthesis in the catalytic domain of F(1) is coupled via a rotary mechanism of the central stalk subunits to proton translocation.</text>
</comment>
<comment type="function">
    <text evidence="1">This protein is part of the stalk that links CF(0) to CF(1). It either transmits conformational changes from CF(0) to CF(1) or is implicated in proton conduction.</text>
</comment>
<comment type="subunit">
    <text evidence="1">F-type ATPases have 2 components, F(1) - the catalytic core - and F(0) - the membrane proton channel. F(1) has five subunits: alpha(3), beta(3), gamma(1), delta(1), epsilon(1). CF(0) has four main subunits: a(1), b(1), b'(1) and c(10-14). The alpha and beta chains form an alternating ring which encloses part of the gamma chain. F(1) is attached to F(0) by a central stalk formed by the gamma and epsilon chains, while a peripheral stalk is formed by the delta, b and b' chains.</text>
</comment>
<comment type="subcellular location">
    <subcellularLocation>
        <location evidence="1">Cellular thylakoid membrane</location>
        <topology evidence="1">Peripheral membrane protein</topology>
    </subcellularLocation>
</comment>
<comment type="similarity">
    <text evidence="1">Belongs to the ATPase delta chain family.</text>
</comment>
<sequence>MPLLNSVTTPYAEALLQVVNENSQTEEMVSEVKQLLELVNDSPELEKALSSPILETDAKKKIIIEIFSNKVNSSLLNFLKLLADRQRIGILTSILDRFLEIYRENSNIALATVTSAVELTDEQKGLITKKIINIAGTEKLELVTKIDPSLIGGFVASVGSKVIDASLASQIRKLGLTLSK</sequence>
<keyword id="KW-0066">ATP synthesis</keyword>
<keyword id="KW-0139">CF(1)</keyword>
<keyword id="KW-0375">Hydrogen ion transport</keyword>
<keyword id="KW-0406">Ion transport</keyword>
<keyword id="KW-0472">Membrane</keyword>
<keyword id="KW-0793">Thylakoid</keyword>
<keyword id="KW-0813">Transport</keyword>